<organism>
    <name type="scientific">Staphylococcus aureus (strain JH1)</name>
    <dbReference type="NCBI Taxonomy" id="359787"/>
    <lineage>
        <taxon>Bacteria</taxon>
        <taxon>Bacillati</taxon>
        <taxon>Bacillota</taxon>
        <taxon>Bacilli</taxon>
        <taxon>Bacillales</taxon>
        <taxon>Staphylococcaceae</taxon>
        <taxon>Staphylococcus</taxon>
    </lineage>
</organism>
<comment type="catalytic activity">
    <reaction evidence="1">
        <text>(6R)-10-formyltetrahydrofolate + 5-amino-1-(5-phospho-beta-D-ribosyl)imidazole-4-carboxamide = 5-formamido-1-(5-phospho-D-ribosyl)imidazole-4-carboxamide + (6S)-5,6,7,8-tetrahydrofolate</text>
        <dbReference type="Rhea" id="RHEA:22192"/>
        <dbReference type="ChEBI" id="CHEBI:57453"/>
        <dbReference type="ChEBI" id="CHEBI:58467"/>
        <dbReference type="ChEBI" id="CHEBI:58475"/>
        <dbReference type="ChEBI" id="CHEBI:195366"/>
        <dbReference type="EC" id="2.1.2.3"/>
    </reaction>
</comment>
<comment type="catalytic activity">
    <reaction evidence="1">
        <text>IMP + H2O = 5-formamido-1-(5-phospho-D-ribosyl)imidazole-4-carboxamide</text>
        <dbReference type="Rhea" id="RHEA:18445"/>
        <dbReference type="ChEBI" id="CHEBI:15377"/>
        <dbReference type="ChEBI" id="CHEBI:58053"/>
        <dbReference type="ChEBI" id="CHEBI:58467"/>
        <dbReference type="EC" id="3.5.4.10"/>
    </reaction>
</comment>
<comment type="pathway">
    <text evidence="1">Purine metabolism; IMP biosynthesis via de novo pathway; 5-formamido-1-(5-phospho-D-ribosyl)imidazole-4-carboxamide from 5-amino-1-(5-phospho-D-ribosyl)imidazole-4-carboxamide (10-formyl THF route): step 1/1.</text>
</comment>
<comment type="pathway">
    <text evidence="1">Purine metabolism; IMP biosynthesis via de novo pathway; IMP from 5-formamido-1-(5-phospho-D-ribosyl)imidazole-4-carboxamide: step 1/1.</text>
</comment>
<comment type="domain">
    <text evidence="1">The IMP cyclohydrolase activity resides in the N-terminal region.</text>
</comment>
<comment type="similarity">
    <text evidence="1">Belongs to the PurH family.</text>
</comment>
<name>PUR9_STAA2</name>
<accession>A6U0P1</accession>
<reference key="1">
    <citation type="submission" date="2007-06" db="EMBL/GenBank/DDBJ databases">
        <title>Complete sequence of chromosome of Staphylococcus aureus subsp. aureus JH1.</title>
        <authorList>
            <consortium name="US DOE Joint Genome Institute"/>
            <person name="Copeland A."/>
            <person name="Lucas S."/>
            <person name="Lapidus A."/>
            <person name="Barry K."/>
            <person name="Detter J.C."/>
            <person name="Glavina del Rio T."/>
            <person name="Hammon N."/>
            <person name="Israni S."/>
            <person name="Dalin E."/>
            <person name="Tice H."/>
            <person name="Pitluck S."/>
            <person name="Chain P."/>
            <person name="Malfatti S."/>
            <person name="Shin M."/>
            <person name="Vergez L."/>
            <person name="Schmutz J."/>
            <person name="Larimer F."/>
            <person name="Land M."/>
            <person name="Hauser L."/>
            <person name="Kyrpides N."/>
            <person name="Ivanova N."/>
            <person name="Tomasz A."/>
            <person name="Richardson P."/>
        </authorList>
    </citation>
    <scope>NUCLEOTIDE SEQUENCE [LARGE SCALE GENOMIC DNA]</scope>
    <source>
        <strain>JH1</strain>
    </source>
</reference>
<feature type="chain" id="PRO_1000076497" description="Bifunctional purine biosynthesis protein PurH">
    <location>
        <begin position="1"/>
        <end position="492"/>
    </location>
</feature>
<feature type="domain" description="MGS-like" evidence="2">
    <location>
        <begin position="1"/>
        <end position="144"/>
    </location>
</feature>
<evidence type="ECO:0000255" key="1">
    <source>
        <dbReference type="HAMAP-Rule" id="MF_00139"/>
    </source>
</evidence>
<evidence type="ECO:0000255" key="2">
    <source>
        <dbReference type="PROSITE-ProRule" id="PRU01202"/>
    </source>
</evidence>
<proteinExistence type="inferred from homology"/>
<keyword id="KW-0378">Hydrolase</keyword>
<keyword id="KW-0511">Multifunctional enzyme</keyword>
<keyword id="KW-0658">Purine biosynthesis</keyword>
<keyword id="KW-0808">Transferase</keyword>
<sequence>MKKAILSVSNKTGIVEFAKALTQLNYELYSTGGTKRILDEANVPVRSVSDLTHFPEIMDGRVKTLHPAVHGGILADRNKPQHLNELSEQHIDLIDMVVVNLYPFQQTVANPDVTMDEAIENIDIGGPTMLRAAAKNYKHVTTIVHPADYHEVLTRLRNDSLDESYRQSLMIKVFEHTAEYDEAIVRFFKGDKETLRYGENPQQSAYFVRTSNAKHTIAGAKQLHGKQLSYNNIKDADATLALVKKFDTPAAVAVKHMNPCGVGIGDTIEQAFQHAYEADSQSIFGGIVALNRAVTPELAEQLHSIFLEVIIAPKFTDEALDILKQKKNVRLLEIDMTIDSNEEEFVSVSGGYLVQDKDNYVVPKEEMKVVTEVAPTDEQWEAMLLGWKVVPSVKSNAIILSNNKQTVGIGAGQMNRVGAAKIALERAIEINDHVALVSDGFFPMGDTVELAAQHGIKAIIQPGGSIKDQDSIDMANKHGIAMVVTGTRHFKH</sequence>
<gene>
    <name evidence="1" type="primary">purH</name>
    <name type="ordered locus">SaurJH1_1155</name>
</gene>
<dbReference type="EC" id="2.1.2.3" evidence="1"/>
<dbReference type="EC" id="3.5.4.10" evidence="1"/>
<dbReference type="EMBL" id="CP000736">
    <property type="protein sequence ID" value="ABR52009.1"/>
    <property type="molecule type" value="Genomic_DNA"/>
</dbReference>
<dbReference type="SMR" id="A6U0P1"/>
<dbReference type="KEGG" id="sah:SaurJH1_1155"/>
<dbReference type="HOGENOM" id="CLU_016316_5_2_9"/>
<dbReference type="UniPathway" id="UPA00074">
    <property type="reaction ID" value="UER00133"/>
</dbReference>
<dbReference type="UniPathway" id="UPA00074">
    <property type="reaction ID" value="UER00135"/>
</dbReference>
<dbReference type="GO" id="GO:0005829">
    <property type="term" value="C:cytosol"/>
    <property type="evidence" value="ECO:0007669"/>
    <property type="project" value="TreeGrafter"/>
</dbReference>
<dbReference type="GO" id="GO:0003937">
    <property type="term" value="F:IMP cyclohydrolase activity"/>
    <property type="evidence" value="ECO:0007669"/>
    <property type="project" value="UniProtKB-UniRule"/>
</dbReference>
<dbReference type="GO" id="GO:0004643">
    <property type="term" value="F:phosphoribosylaminoimidazolecarboxamide formyltransferase activity"/>
    <property type="evidence" value="ECO:0007669"/>
    <property type="project" value="UniProtKB-UniRule"/>
</dbReference>
<dbReference type="GO" id="GO:0006189">
    <property type="term" value="P:'de novo' IMP biosynthetic process"/>
    <property type="evidence" value="ECO:0007669"/>
    <property type="project" value="UniProtKB-UniRule"/>
</dbReference>
<dbReference type="CDD" id="cd01421">
    <property type="entry name" value="IMPCH"/>
    <property type="match status" value="1"/>
</dbReference>
<dbReference type="FunFam" id="3.40.140.20:FF:000001">
    <property type="entry name" value="Bifunctional purine biosynthesis protein PurH"/>
    <property type="match status" value="1"/>
</dbReference>
<dbReference type="FunFam" id="3.40.140.20:FF:000002">
    <property type="entry name" value="Bifunctional purine biosynthesis protein PurH"/>
    <property type="match status" value="1"/>
</dbReference>
<dbReference type="FunFam" id="3.40.50.1380:FF:000001">
    <property type="entry name" value="Bifunctional purine biosynthesis protein PurH"/>
    <property type="match status" value="1"/>
</dbReference>
<dbReference type="Gene3D" id="3.40.140.20">
    <property type="match status" value="2"/>
</dbReference>
<dbReference type="Gene3D" id="3.40.50.1380">
    <property type="entry name" value="Methylglyoxal synthase-like domain"/>
    <property type="match status" value="1"/>
</dbReference>
<dbReference type="HAMAP" id="MF_00139">
    <property type="entry name" value="PurH"/>
    <property type="match status" value="1"/>
</dbReference>
<dbReference type="InterPro" id="IPR024051">
    <property type="entry name" value="AICAR_Tfase_dup_dom_sf"/>
</dbReference>
<dbReference type="InterPro" id="IPR016193">
    <property type="entry name" value="Cytidine_deaminase-like"/>
</dbReference>
<dbReference type="InterPro" id="IPR011607">
    <property type="entry name" value="MGS-like_dom"/>
</dbReference>
<dbReference type="InterPro" id="IPR036914">
    <property type="entry name" value="MGS-like_dom_sf"/>
</dbReference>
<dbReference type="InterPro" id="IPR002695">
    <property type="entry name" value="PurH-like"/>
</dbReference>
<dbReference type="NCBIfam" id="NF002049">
    <property type="entry name" value="PRK00881.1"/>
    <property type="match status" value="1"/>
</dbReference>
<dbReference type="NCBIfam" id="TIGR00355">
    <property type="entry name" value="purH"/>
    <property type="match status" value="1"/>
</dbReference>
<dbReference type="PANTHER" id="PTHR11692:SF0">
    <property type="entry name" value="BIFUNCTIONAL PURINE BIOSYNTHESIS PROTEIN ATIC"/>
    <property type="match status" value="1"/>
</dbReference>
<dbReference type="PANTHER" id="PTHR11692">
    <property type="entry name" value="BIFUNCTIONAL PURINE BIOSYNTHESIS PROTEIN PURH"/>
    <property type="match status" value="1"/>
</dbReference>
<dbReference type="Pfam" id="PF01808">
    <property type="entry name" value="AICARFT_IMPCHas"/>
    <property type="match status" value="1"/>
</dbReference>
<dbReference type="Pfam" id="PF02142">
    <property type="entry name" value="MGS"/>
    <property type="match status" value="1"/>
</dbReference>
<dbReference type="PIRSF" id="PIRSF000414">
    <property type="entry name" value="AICARFT_IMPCHas"/>
    <property type="match status" value="1"/>
</dbReference>
<dbReference type="SMART" id="SM00798">
    <property type="entry name" value="AICARFT_IMPCHas"/>
    <property type="match status" value="1"/>
</dbReference>
<dbReference type="SMART" id="SM00851">
    <property type="entry name" value="MGS"/>
    <property type="match status" value="1"/>
</dbReference>
<dbReference type="SUPFAM" id="SSF53927">
    <property type="entry name" value="Cytidine deaminase-like"/>
    <property type="match status" value="1"/>
</dbReference>
<dbReference type="SUPFAM" id="SSF52335">
    <property type="entry name" value="Methylglyoxal synthase-like"/>
    <property type="match status" value="1"/>
</dbReference>
<dbReference type="PROSITE" id="PS51855">
    <property type="entry name" value="MGS"/>
    <property type="match status" value="1"/>
</dbReference>
<protein>
    <recommendedName>
        <fullName evidence="1">Bifunctional purine biosynthesis protein PurH</fullName>
    </recommendedName>
    <domain>
        <recommendedName>
            <fullName evidence="1">Phosphoribosylaminoimidazolecarboxamide formyltransferase</fullName>
            <ecNumber evidence="1">2.1.2.3</ecNumber>
        </recommendedName>
        <alternativeName>
            <fullName evidence="1">AICAR transformylase</fullName>
        </alternativeName>
    </domain>
    <domain>
        <recommendedName>
            <fullName evidence="1">IMP cyclohydrolase</fullName>
            <ecNumber evidence="1">3.5.4.10</ecNumber>
        </recommendedName>
        <alternativeName>
            <fullName evidence="1">ATIC</fullName>
        </alternativeName>
        <alternativeName>
            <fullName evidence="1">IMP synthase</fullName>
        </alternativeName>
        <alternativeName>
            <fullName evidence="1">Inosinicase</fullName>
        </alternativeName>
    </domain>
</protein>